<reference evidence="7" key="1">
    <citation type="journal article" date="2003" name="Proc. Natl. Acad. Sci. U.S.A.">
        <title>Molecular evolution of the insect chemoreceptor gene superfamily in Drosophila melanogaster.</title>
        <authorList>
            <person name="Robertson H.M."/>
            <person name="Warr C.G."/>
            <person name="Carlson J.R."/>
        </authorList>
    </citation>
    <scope>NUCLEOTIDE SEQUENCE [GENOMIC DNA]</scope>
    <source>
        <strain evidence="4">Oregon-R</strain>
    </source>
</reference>
<reference evidence="7" key="2">
    <citation type="journal article" date="2000" name="Science">
        <title>The genome sequence of Drosophila melanogaster.</title>
        <authorList>
            <person name="Adams M.D."/>
            <person name="Celniker S.E."/>
            <person name="Holt R.A."/>
            <person name="Evans C.A."/>
            <person name="Gocayne J.D."/>
            <person name="Amanatides P.G."/>
            <person name="Scherer S.E."/>
            <person name="Li P.W."/>
            <person name="Hoskins R.A."/>
            <person name="Galle R.F."/>
            <person name="George R.A."/>
            <person name="Lewis S.E."/>
            <person name="Richards S."/>
            <person name="Ashburner M."/>
            <person name="Henderson S.N."/>
            <person name="Sutton G.G."/>
            <person name="Wortman J.R."/>
            <person name="Yandell M.D."/>
            <person name="Zhang Q."/>
            <person name="Chen L.X."/>
            <person name="Brandon R.C."/>
            <person name="Rogers Y.-H.C."/>
            <person name="Blazej R.G."/>
            <person name="Champe M."/>
            <person name="Pfeiffer B.D."/>
            <person name="Wan K.H."/>
            <person name="Doyle C."/>
            <person name="Baxter E.G."/>
            <person name="Helt G."/>
            <person name="Nelson C.R."/>
            <person name="Miklos G.L.G."/>
            <person name="Abril J.F."/>
            <person name="Agbayani A."/>
            <person name="An H.-J."/>
            <person name="Andrews-Pfannkoch C."/>
            <person name="Baldwin D."/>
            <person name="Ballew R.M."/>
            <person name="Basu A."/>
            <person name="Baxendale J."/>
            <person name="Bayraktaroglu L."/>
            <person name="Beasley E.M."/>
            <person name="Beeson K.Y."/>
            <person name="Benos P.V."/>
            <person name="Berman B.P."/>
            <person name="Bhandari D."/>
            <person name="Bolshakov S."/>
            <person name="Borkova D."/>
            <person name="Botchan M.R."/>
            <person name="Bouck J."/>
            <person name="Brokstein P."/>
            <person name="Brottier P."/>
            <person name="Burtis K.C."/>
            <person name="Busam D.A."/>
            <person name="Butler H."/>
            <person name="Cadieu E."/>
            <person name="Center A."/>
            <person name="Chandra I."/>
            <person name="Cherry J.M."/>
            <person name="Cawley S."/>
            <person name="Dahlke C."/>
            <person name="Davenport L.B."/>
            <person name="Davies P."/>
            <person name="de Pablos B."/>
            <person name="Delcher A."/>
            <person name="Deng Z."/>
            <person name="Mays A.D."/>
            <person name="Dew I."/>
            <person name="Dietz S.M."/>
            <person name="Dodson K."/>
            <person name="Doup L.E."/>
            <person name="Downes M."/>
            <person name="Dugan-Rocha S."/>
            <person name="Dunkov B.C."/>
            <person name="Dunn P."/>
            <person name="Durbin K.J."/>
            <person name="Evangelista C.C."/>
            <person name="Ferraz C."/>
            <person name="Ferriera S."/>
            <person name="Fleischmann W."/>
            <person name="Fosler C."/>
            <person name="Gabrielian A.E."/>
            <person name="Garg N.S."/>
            <person name="Gelbart W.M."/>
            <person name="Glasser K."/>
            <person name="Glodek A."/>
            <person name="Gong F."/>
            <person name="Gorrell J.H."/>
            <person name="Gu Z."/>
            <person name="Guan P."/>
            <person name="Harris M."/>
            <person name="Harris N.L."/>
            <person name="Harvey D.A."/>
            <person name="Heiman T.J."/>
            <person name="Hernandez J.R."/>
            <person name="Houck J."/>
            <person name="Hostin D."/>
            <person name="Houston K.A."/>
            <person name="Howland T.J."/>
            <person name="Wei M.-H."/>
            <person name="Ibegwam C."/>
            <person name="Jalali M."/>
            <person name="Kalush F."/>
            <person name="Karpen G.H."/>
            <person name="Ke Z."/>
            <person name="Kennison J.A."/>
            <person name="Ketchum K.A."/>
            <person name="Kimmel B.E."/>
            <person name="Kodira C.D."/>
            <person name="Kraft C.L."/>
            <person name="Kravitz S."/>
            <person name="Kulp D."/>
            <person name="Lai Z."/>
            <person name="Lasko P."/>
            <person name="Lei Y."/>
            <person name="Levitsky A.A."/>
            <person name="Li J.H."/>
            <person name="Li Z."/>
            <person name="Liang Y."/>
            <person name="Lin X."/>
            <person name="Liu X."/>
            <person name="Mattei B."/>
            <person name="McIntosh T.C."/>
            <person name="McLeod M.P."/>
            <person name="McPherson D."/>
            <person name="Merkulov G."/>
            <person name="Milshina N.V."/>
            <person name="Mobarry C."/>
            <person name="Morris J."/>
            <person name="Moshrefi A."/>
            <person name="Mount S.M."/>
            <person name="Moy M."/>
            <person name="Murphy B."/>
            <person name="Murphy L."/>
            <person name="Muzny D.M."/>
            <person name="Nelson D.L."/>
            <person name="Nelson D.R."/>
            <person name="Nelson K.A."/>
            <person name="Nixon K."/>
            <person name="Nusskern D.R."/>
            <person name="Pacleb J.M."/>
            <person name="Palazzolo M."/>
            <person name="Pittman G.S."/>
            <person name="Pan S."/>
            <person name="Pollard J."/>
            <person name="Puri V."/>
            <person name="Reese M.G."/>
            <person name="Reinert K."/>
            <person name="Remington K."/>
            <person name="Saunders R.D.C."/>
            <person name="Scheeler F."/>
            <person name="Shen H."/>
            <person name="Shue B.C."/>
            <person name="Siden-Kiamos I."/>
            <person name="Simpson M."/>
            <person name="Skupski M.P."/>
            <person name="Smith T.J."/>
            <person name="Spier E."/>
            <person name="Spradling A.C."/>
            <person name="Stapleton M."/>
            <person name="Strong R."/>
            <person name="Sun E."/>
            <person name="Svirskas R."/>
            <person name="Tector C."/>
            <person name="Turner R."/>
            <person name="Venter E."/>
            <person name="Wang A.H."/>
            <person name="Wang X."/>
            <person name="Wang Z.-Y."/>
            <person name="Wassarman D.A."/>
            <person name="Weinstock G.M."/>
            <person name="Weissenbach J."/>
            <person name="Williams S.M."/>
            <person name="Woodage T."/>
            <person name="Worley K.C."/>
            <person name="Wu D."/>
            <person name="Yang S."/>
            <person name="Yao Q.A."/>
            <person name="Ye J."/>
            <person name="Yeh R.-F."/>
            <person name="Zaveri J.S."/>
            <person name="Zhan M."/>
            <person name="Zhang G."/>
            <person name="Zhao Q."/>
            <person name="Zheng L."/>
            <person name="Zheng X.H."/>
            <person name="Zhong F.N."/>
            <person name="Zhong W."/>
            <person name="Zhou X."/>
            <person name="Zhu S.C."/>
            <person name="Zhu X."/>
            <person name="Smith H.O."/>
            <person name="Gibbs R.A."/>
            <person name="Myers E.W."/>
            <person name="Rubin G.M."/>
            <person name="Venter J.C."/>
        </authorList>
    </citation>
    <scope>NUCLEOTIDE SEQUENCE [LARGE SCALE GENOMIC DNA]</scope>
    <source>
        <strain evidence="3">Berkeley</strain>
    </source>
</reference>
<reference key="3">
    <citation type="journal article" date="2002" name="Genome Biol.">
        <title>Annotation of the Drosophila melanogaster euchromatic genome: a systematic review.</title>
        <authorList>
            <person name="Misra S."/>
            <person name="Crosby M.A."/>
            <person name="Mungall C.J."/>
            <person name="Matthews B.B."/>
            <person name="Campbell K.S."/>
            <person name="Hradecky P."/>
            <person name="Huang Y."/>
            <person name="Kaminker J.S."/>
            <person name="Millburn G.H."/>
            <person name="Prochnik S.E."/>
            <person name="Smith C.D."/>
            <person name="Tupy J.L."/>
            <person name="Whitfield E.J."/>
            <person name="Bayraktaroglu L."/>
            <person name="Berman B.P."/>
            <person name="Bettencourt B.R."/>
            <person name="Celniker S.E."/>
            <person name="de Grey A.D.N.J."/>
            <person name="Drysdale R.A."/>
            <person name="Harris N.L."/>
            <person name="Richter J."/>
            <person name="Russo S."/>
            <person name="Schroeder A.J."/>
            <person name="Shu S.Q."/>
            <person name="Stapleton M."/>
            <person name="Yamada C."/>
            <person name="Ashburner M."/>
            <person name="Gelbart W.M."/>
            <person name="Rubin G.M."/>
            <person name="Lewis S.E."/>
        </authorList>
    </citation>
    <scope>GENOME REANNOTATION</scope>
    <source>
        <strain>Berkeley</strain>
    </source>
</reference>
<reference key="4">
    <citation type="journal article" date="2011" name="J. Neurosci.">
        <title>Molecular and cellular organization of the taste system in the Drosophila larva.</title>
        <authorList>
            <person name="Kwon J.Y."/>
            <person name="Dahanukar A."/>
            <person name="Weiss L.A."/>
            <person name="Carlson J.R."/>
        </authorList>
    </citation>
    <scope>TISSUE SPECIFICITY</scope>
</reference>
<name>GR22D_DROME</name>
<organism>
    <name type="scientific">Drosophila melanogaster</name>
    <name type="common">Fruit fly</name>
    <dbReference type="NCBI Taxonomy" id="7227"/>
    <lineage>
        <taxon>Eukaryota</taxon>
        <taxon>Metazoa</taxon>
        <taxon>Ecdysozoa</taxon>
        <taxon>Arthropoda</taxon>
        <taxon>Hexapoda</taxon>
        <taxon>Insecta</taxon>
        <taxon>Pterygota</taxon>
        <taxon>Neoptera</taxon>
        <taxon>Endopterygota</taxon>
        <taxon>Diptera</taxon>
        <taxon>Brachycera</taxon>
        <taxon>Muscomorpha</taxon>
        <taxon>Ephydroidea</taxon>
        <taxon>Drosophilidae</taxon>
        <taxon>Drosophila</taxon>
        <taxon>Sophophora</taxon>
    </lineage>
</organism>
<proteinExistence type="evidence at transcript level"/>
<feature type="chain" id="PRO_0000216496" description="Putative gustatory receptor 22d">
    <location>
        <begin position="1"/>
        <end position="387"/>
    </location>
</feature>
<feature type="topological domain" description="Cytoplasmic" evidence="1">
    <location>
        <begin position="1"/>
        <end position="43"/>
    </location>
</feature>
<feature type="transmembrane region" description="Helical; Name=1" evidence="2">
    <location>
        <begin position="44"/>
        <end position="64"/>
    </location>
</feature>
<feature type="topological domain" description="Extracellular" evidence="1">
    <location>
        <begin position="65"/>
        <end position="82"/>
    </location>
</feature>
<feature type="transmembrane region" description="Helical; Name=2" evidence="2">
    <location>
        <begin position="83"/>
        <end position="103"/>
    </location>
</feature>
<feature type="topological domain" description="Cytoplasmic" evidence="1">
    <location>
        <begin position="104"/>
        <end position="142"/>
    </location>
</feature>
<feature type="transmembrane region" description="Helical; Name=3" evidence="2">
    <location>
        <begin position="143"/>
        <end position="163"/>
    </location>
</feature>
<feature type="topological domain" description="Extracellular" evidence="1">
    <location>
        <begin position="164"/>
        <end position="184"/>
    </location>
</feature>
<feature type="transmembrane region" description="Helical; Name=4" evidence="2">
    <location>
        <begin position="185"/>
        <end position="205"/>
    </location>
</feature>
<feature type="topological domain" description="Cytoplasmic" evidence="1">
    <location>
        <begin position="206"/>
        <end position="252"/>
    </location>
</feature>
<feature type="transmembrane region" description="Helical; Name=5" evidence="2">
    <location>
        <begin position="253"/>
        <end position="273"/>
    </location>
</feature>
<feature type="topological domain" description="Extracellular" evidence="1">
    <location>
        <begin position="274"/>
        <end position="281"/>
    </location>
</feature>
<feature type="transmembrane region" description="Helical; Name=6" evidence="2">
    <location>
        <begin position="282"/>
        <end position="302"/>
    </location>
</feature>
<feature type="topological domain" description="Cytoplasmic" evidence="1">
    <location>
        <begin position="303"/>
        <end position="363"/>
    </location>
</feature>
<feature type="transmembrane region" description="Helical; Name=7" evidence="2">
    <location>
        <begin position="364"/>
        <end position="384"/>
    </location>
</feature>
<feature type="topological domain" description="Extracellular" evidence="1">
    <location>
        <begin position="385"/>
        <end position="387"/>
    </location>
</feature>
<accession>P84181</accession>
<accession>M9PBP0</accession>
<dbReference type="EMBL" id="AE014134">
    <property type="protein sequence ID" value="AGB92419.1"/>
    <property type="molecule type" value="Genomic_DNA"/>
</dbReference>
<dbReference type="RefSeq" id="NP_001259882.1">
    <property type="nucleotide sequence ID" value="NM_001272953.1"/>
</dbReference>
<dbReference type="SMR" id="P84181"/>
<dbReference type="FunCoup" id="P84181">
    <property type="interactions" value="11"/>
</dbReference>
<dbReference type="STRING" id="7227.FBpp0301799"/>
<dbReference type="PaxDb" id="7227-FBpp0301799"/>
<dbReference type="EnsemblMetazoa" id="FBtr0310114">
    <property type="protein sequence ID" value="FBpp0301799"/>
    <property type="gene ID" value="FBgn0045498"/>
</dbReference>
<dbReference type="GeneID" id="14462661"/>
<dbReference type="KEGG" id="dme:Dmel_CG31930"/>
<dbReference type="AGR" id="FB:FBgn0045498"/>
<dbReference type="CTD" id="14462661"/>
<dbReference type="FlyBase" id="FBgn0045498">
    <property type="gene designation" value="Gr22d"/>
</dbReference>
<dbReference type="VEuPathDB" id="VectorBase:FBgn0045498"/>
<dbReference type="eggNOG" id="ENOG502T94A">
    <property type="taxonomic scope" value="Eukaryota"/>
</dbReference>
<dbReference type="HOGENOM" id="CLU_714904_0_0_1"/>
<dbReference type="InParanoid" id="P84181"/>
<dbReference type="OMA" id="ILYSSWA"/>
<dbReference type="OrthoDB" id="8067175at2759"/>
<dbReference type="BioGRID-ORCS" id="14462661">
    <property type="hits" value="0 hits in 1 CRISPR screen"/>
</dbReference>
<dbReference type="GenomeRNAi" id="14462661"/>
<dbReference type="PRO" id="PR:P84181"/>
<dbReference type="Proteomes" id="UP000000803">
    <property type="component" value="Chromosome 2L"/>
</dbReference>
<dbReference type="GO" id="GO:0030424">
    <property type="term" value="C:axon"/>
    <property type="evidence" value="ECO:0000318"/>
    <property type="project" value="GO_Central"/>
</dbReference>
<dbReference type="GO" id="GO:0030425">
    <property type="term" value="C:dendrite"/>
    <property type="evidence" value="ECO:0000318"/>
    <property type="project" value="GO_Central"/>
</dbReference>
<dbReference type="GO" id="GO:0016020">
    <property type="term" value="C:membrane"/>
    <property type="evidence" value="ECO:0000255"/>
    <property type="project" value="FlyBase"/>
</dbReference>
<dbReference type="GO" id="GO:0043025">
    <property type="term" value="C:neuronal cell body"/>
    <property type="evidence" value="ECO:0000318"/>
    <property type="project" value="GO_Central"/>
</dbReference>
<dbReference type="GO" id="GO:0005886">
    <property type="term" value="C:plasma membrane"/>
    <property type="evidence" value="ECO:0000250"/>
    <property type="project" value="FlyBase"/>
</dbReference>
<dbReference type="GO" id="GO:0015276">
    <property type="term" value="F:ligand-gated monoatomic ion channel activity"/>
    <property type="evidence" value="ECO:0000250"/>
    <property type="project" value="FlyBase"/>
</dbReference>
<dbReference type="GO" id="GO:0008527">
    <property type="term" value="F:taste receptor activity"/>
    <property type="evidence" value="ECO:0000250"/>
    <property type="project" value="FlyBase"/>
</dbReference>
<dbReference type="GO" id="GO:0050912">
    <property type="term" value="P:detection of chemical stimulus involved in sensory perception of taste"/>
    <property type="evidence" value="ECO:0000250"/>
    <property type="project" value="FlyBase"/>
</dbReference>
<dbReference type="GO" id="GO:0034220">
    <property type="term" value="P:monoatomic ion transmembrane transport"/>
    <property type="evidence" value="ECO:0000250"/>
    <property type="project" value="FlyBase"/>
</dbReference>
<dbReference type="GO" id="GO:0007165">
    <property type="term" value="P:signal transduction"/>
    <property type="evidence" value="ECO:0007669"/>
    <property type="project" value="UniProtKB-KW"/>
</dbReference>
<dbReference type="InterPro" id="IPR013604">
    <property type="entry name" value="7TM_chemorcpt"/>
</dbReference>
<dbReference type="PANTHER" id="PTHR21143:SF131">
    <property type="entry name" value="GUSTATORY AND ODORANT RECEPTOR 63A-RELATED"/>
    <property type="match status" value="1"/>
</dbReference>
<dbReference type="PANTHER" id="PTHR21143">
    <property type="entry name" value="INVERTEBRATE GUSTATORY RECEPTOR"/>
    <property type="match status" value="1"/>
</dbReference>
<dbReference type="Pfam" id="PF08395">
    <property type="entry name" value="7tm_7"/>
    <property type="match status" value="1"/>
</dbReference>
<evidence type="ECO:0000250" key="1"/>
<evidence type="ECO:0000255" key="2"/>
<evidence type="ECO:0000269" key="3">
    <source>
    </source>
</evidence>
<evidence type="ECO:0000269" key="4">
    <source>
    </source>
</evidence>
<evidence type="ECO:0000269" key="5">
    <source>
    </source>
</evidence>
<evidence type="ECO:0000303" key="6">
    <source>
    </source>
</evidence>
<evidence type="ECO:0000305" key="7"/>
<evidence type="ECO:0000312" key="8">
    <source>
        <dbReference type="FlyBase" id="FBgn0045498"/>
    </source>
</evidence>
<gene>
    <name evidence="6 8" type="primary">Gr22d</name>
    <name evidence="8" type="ORF">CG31930</name>
</gene>
<sequence>MFRPRCGLRQKFVYVILKSILYSSWLLGIFPFKYEPKKRRLRRSMWLILFGVVISSSLLILMVKQSAEDREHGIMLDVFQRNALLYQISSLMGVVGVVSICTVHLRTLWRSKHLEEIYNGLMLLEAKYFCSNAVECPAFDGYVIQKGVVIVVGLLAPWMVHFGMPDSKLPVLNVLVVSMVKLGTLLLALHYHLGVVIIYRFVWLINRELLSLVCSLRGNHKGSSSRVRFLLKLYNKLVNLYSKLADCYDCQTVLMMAIFLAANIIVCFYMIVYRISLSKMSFFVMLIMFPLAIANNFMDFWLSMKVCDLLQKTGRQTSMILKLFNDIENMDKDLEISISDFALYCSHRRFKFLHCGLFHVNREMGFKMFVASVLYLLYLVQFDYMNL</sequence>
<protein>
    <recommendedName>
        <fullName evidence="6">Putative gustatory receptor 22d</fullName>
    </recommendedName>
</protein>
<comment type="function">
    <text evidence="1">Probable gustatory receptor which mediates acceptance or avoidance behavior, depending on its substrates.</text>
</comment>
<comment type="subcellular location">
    <subcellularLocation>
        <location evidence="1">Cell membrane</location>
        <topology evidence="1">Multi-pass membrane protein</topology>
    </subcellularLocation>
</comment>
<comment type="tissue specificity">
    <text evidence="5">Expressed in neurons of the dorsal pharyngeal sense organs of larvae.</text>
</comment>
<comment type="similarity">
    <text evidence="7">Belongs to the insect chemoreceptor superfamily. Gustatory receptor (GR) family. Gr22e subfamily.</text>
</comment>
<comment type="caution">
    <text evidence="7">The strain (Berkeley) sequenced by the collaborative genome project contains a deletion of T nucleotide in position 49 leading to premature stop codon. It is therefore considered a pseudogene.</text>
</comment>
<keyword id="KW-1003">Cell membrane</keyword>
<keyword id="KW-0472">Membrane</keyword>
<keyword id="KW-0675">Receptor</keyword>
<keyword id="KW-1185">Reference proteome</keyword>
<keyword id="KW-0807">Transducer</keyword>
<keyword id="KW-0812">Transmembrane</keyword>
<keyword id="KW-1133">Transmembrane helix</keyword>